<reference key="1">
    <citation type="journal article" date="2006" name="Genome Biol.">
        <title>Genomic analysis reveals that Pseudomonas aeruginosa virulence is combinatorial.</title>
        <authorList>
            <person name="Lee D.G."/>
            <person name="Urbach J.M."/>
            <person name="Wu G."/>
            <person name="Liberati N.T."/>
            <person name="Feinbaum R.L."/>
            <person name="Miyata S."/>
            <person name="Diggins L.T."/>
            <person name="He J."/>
            <person name="Saucier M."/>
            <person name="Deziel E."/>
            <person name="Friedman L."/>
            <person name="Li L."/>
            <person name="Grills G."/>
            <person name="Montgomery K."/>
            <person name="Kucherlapati R."/>
            <person name="Rahme L.G."/>
            <person name="Ausubel F.M."/>
        </authorList>
    </citation>
    <scope>NUCLEOTIDE SEQUENCE [LARGE SCALE GENOMIC DNA]</scope>
    <source>
        <strain>UCBPP-PA14</strain>
    </source>
</reference>
<keyword id="KW-0998">Cell outer membrane</keyword>
<keyword id="KW-0472">Membrane</keyword>
<keyword id="KW-0732">Signal</keyword>
<organism>
    <name type="scientific">Pseudomonas aeruginosa (strain UCBPP-PA14)</name>
    <dbReference type="NCBI Taxonomy" id="208963"/>
    <lineage>
        <taxon>Bacteria</taxon>
        <taxon>Pseudomonadati</taxon>
        <taxon>Pseudomonadota</taxon>
        <taxon>Gammaproteobacteria</taxon>
        <taxon>Pseudomonadales</taxon>
        <taxon>Pseudomonadaceae</taxon>
        <taxon>Pseudomonas</taxon>
    </lineage>
</organism>
<protein>
    <recommendedName>
        <fullName evidence="1">LPS-assembly protein LptD</fullName>
    </recommendedName>
</protein>
<sequence length="924" mass="104301">MAVKSLVFRRKFPLLVTGSLLALQPVAALTVQAADQFDCKVSATGGWDCSPLQNANANLPPRPAHTATSVSTAAAGSSVSGSGGETVEAEPTQRLVTESGGRALRSRSADYSHLDWIPREKLTAAQLAEIGPYCGGSYIEPVRPGMDDGAPSDESPTYVSAKASRYEQEKQIATLAGDVVLRQGSMQVEGDEANLHQLENRGELVGNVKLRDKGMLVVGDHAQVQLDNGEAQVDNAEYVIHKAHARGSALYAKRSENAIIMLKDGTYTRCEPSSNAWTLKGNNVKLNPATGFGTATNATLRVKDFPVFYTPYIYFPIDDRRQSGFLPPSFSSTSDTGFTLVTPYYFNLAPNYDATLYPRYMAKRGMMLEGEFRYLTHSSEGIVNAAYLNDKDDHREGFPDYSKDRWLYGLKNTTGLDSRWLAEVDYTRISDPYYFQDLDTDLGVGSTTYVNQRGTLTYRGDTFTGRLNAQAYQLATTTDVTPYDRLPQITFDGFLPYNPGGMQFTYGTEFVRFDRDLDENIYFNDDGSIRGKRPDASLQGLARATGDRMHLEPGMSLPMTRSWGYVTPTLKYLYTKYDLDLDSQGKTDLNKRDESFDSNQDRSLPLVKVDSGLYFDRDTTFAGTPFRQTLEPRAMYLYVPYKDQDSLPVFDTSEPSFSYDSLWRENRFTGKDRIGDANQLSLGVTSRFIEENGFERASISAGQIYYFRDRRVQLPGLTEKDLKRLNLDPSGLDNDSWRSPYAFAGQYRFNRDWRINSDFNWNPNTSRTESGSAIFHYQPEVDPGKVVNVGYRYRADARRFDSSRGTFRYGNEDDIIKQHDFSVIWPLVPQWSVLARWQYDYNKNRTLEAFGGFEYDSCCWKLRLINRYWLDVDDDAFLVQSEKADRGIFLQIVLKGLGGIVGNKTEMFLDKGIQGYRQREDQAM</sequence>
<proteinExistence type="inferred from homology"/>
<gene>
    <name evidence="1" type="primary">lptD</name>
    <name type="synonym">imp</name>
    <name type="synonym">ostA</name>
    <name type="ordered locus">PA14_07770</name>
</gene>
<feature type="signal peptide" evidence="1">
    <location>
        <begin position="1"/>
        <end position="33"/>
    </location>
</feature>
<feature type="chain" id="PRO_0000281624" description="LPS-assembly protein LptD">
    <location>
        <begin position="34"/>
        <end position="924"/>
    </location>
</feature>
<feature type="region of interest" description="Disordered" evidence="2">
    <location>
        <begin position="58"/>
        <end position="102"/>
    </location>
</feature>
<feature type="compositionally biased region" description="Low complexity" evidence="2">
    <location>
        <begin position="66"/>
        <end position="90"/>
    </location>
</feature>
<name>LPTD_PSEAB</name>
<dbReference type="EMBL" id="CP000438">
    <property type="protein sequence ID" value="ABJ15559.1"/>
    <property type="molecule type" value="Genomic_DNA"/>
</dbReference>
<dbReference type="RefSeq" id="WP_003137369.1">
    <property type="nucleotide sequence ID" value="NZ_CP034244.1"/>
</dbReference>
<dbReference type="SMR" id="Q02TG8"/>
<dbReference type="KEGG" id="pau:PA14_07770"/>
<dbReference type="PseudoCAP" id="PA14_07770"/>
<dbReference type="HOGENOM" id="CLU_009039_1_0_6"/>
<dbReference type="BioCyc" id="PAER208963:G1G74-640-MONOMER"/>
<dbReference type="Proteomes" id="UP000000653">
    <property type="component" value="Chromosome"/>
</dbReference>
<dbReference type="GO" id="GO:0009279">
    <property type="term" value="C:cell outer membrane"/>
    <property type="evidence" value="ECO:0007669"/>
    <property type="project" value="UniProtKB-SubCell"/>
</dbReference>
<dbReference type="GO" id="GO:1990351">
    <property type="term" value="C:transporter complex"/>
    <property type="evidence" value="ECO:0007669"/>
    <property type="project" value="TreeGrafter"/>
</dbReference>
<dbReference type="GO" id="GO:0043165">
    <property type="term" value="P:Gram-negative-bacterium-type cell outer membrane assembly"/>
    <property type="evidence" value="ECO:0007669"/>
    <property type="project" value="UniProtKB-UniRule"/>
</dbReference>
<dbReference type="GO" id="GO:0015920">
    <property type="term" value="P:lipopolysaccharide transport"/>
    <property type="evidence" value="ECO:0007669"/>
    <property type="project" value="InterPro"/>
</dbReference>
<dbReference type="Gene3D" id="2.60.450.10">
    <property type="entry name" value="Lipopolysaccharide (LPS) transport protein A like domain"/>
    <property type="match status" value="1"/>
</dbReference>
<dbReference type="HAMAP" id="MF_01411">
    <property type="entry name" value="LPS_assembly_LptD"/>
    <property type="match status" value="1"/>
</dbReference>
<dbReference type="InterPro" id="IPR020889">
    <property type="entry name" value="LipoPS_assembly_LptD"/>
</dbReference>
<dbReference type="InterPro" id="IPR050218">
    <property type="entry name" value="LptD"/>
</dbReference>
<dbReference type="InterPro" id="IPR007543">
    <property type="entry name" value="LptD_C"/>
</dbReference>
<dbReference type="InterPro" id="IPR005653">
    <property type="entry name" value="OstA-like_N"/>
</dbReference>
<dbReference type="PANTHER" id="PTHR30189">
    <property type="entry name" value="LPS-ASSEMBLY PROTEIN"/>
    <property type="match status" value="1"/>
</dbReference>
<dbReference type="PANTHER" id="PTHR30189:SF1">
    <property type="entry name" value="LPS-ASSEMBLY PROTEIN LPTD"/>
    <property type="match status" value="1"/>
</dbReference>
<dbReference type="Pfam" id="PF04453">
    <property type="entry name" value="LptD"/>
    <property type="match status" value="1"/>
</dbReference>
<dbReference type="Pfam" id="PF03968">
    <property type="entry name" value="LptD_N"/>
    <property type="match status" value="1"/>
</dbReference>
<comment type="function">
    <text evidence="1">Together with LptE, is involved in the assembly of lipopolysaccharide (LPS) at the surface of the outer membrane.</text>
</comment>
<comment type="subunit">
    <text evidence="1">Component of the lipopolysaccharide transport and assembly complex. Interacts with LptE and LptA.</text>
</comment>
<comment type="subcellular location">
    <subcellularLocation>
        <location evidence="1">Cell outer membrane</location>
    </subcellularLocation>
</comment>
<comment type="similarity">
    <text evidence="1">Belongs to the LptD family.</text>
</comment>
<evidence type="ECO:0000255" key="1">
    <source>
        <dbReference type="HAMAP-Rule" id="MF_01411"/>
    </source>
</evidence>
<evidence type="ECO:0000256" key="2">
    <source>
        <dbReference type="SAM" id="MobiDB-lite"/>
    </source>
</evidence>
<accession>Q02TG8</accession>